<reference key="1">
    <citation type="journal article" date="2002" name="Proc. Natl. Acad. Sci. U.S.A.">
        <title>The Brucella suis genome reveals fundamental similarities between animal and plant pathogens and symbionts.</title>
        <authorList>
            <person name="Paulsen I.T."/>
            <person name="Seshadri R."/>
            <person name="Nelson K.E."/>
            <person name="Eisen J.A."/>
            <person name="Heidelberg J.F."/>
            <person name="Read T.D."/>
            <person name="Dodson R.J."/>
            <person name="Umayam L.A."/>
            <person name="Brinkac L.M."/>
            <person name="Beanan M.J."/>
            <person name="Daugherty S.C."/>
            <person name="DeBoy R.T."/>
            <person name="Durkin A.S."/>
            <person name="Kolonay J.F."/>
            <person name="Madupu R."/>
            <person name="Nelson W.C."/>
            <person name="Ayodeji B."/>
            <person name="Kraul M."/>
            <person name="Shetty J."/>
            <person name="Malek J.A."/>
            <person name="Van Aken S.E."/>
            <person name="Riedmuller S."/>
            <person name="Tettelin H."/>
            <person name="Gill S.R."/>
            <person name="White O."/>
            <person name="Salzberg S.L."/>
            <person name="Hoover D.L."/>
            <person name="Lindler L.E."/>
            <person name="Halling S.M."/>
            <person name="Boyle S.M."/>
            <person name="Fraser C.M."/>
        </authorList>
    </citation>
    <scope>NUCLEOTIDE SEQUENCE [LARGE SCALE GENOMIC DNA]</scope>
    <source>
        <strain>1330</strain>
    </source>
</reference>
<reference key="2">
    <citation type="journal article" date="2011" name="J. Bacteriol.">
        <title>Revised genome sequence of Brucella suis 1330.</title>
        <authorList>
            <person name="Tae H."/>
            <person name="Shallom S."/>
            <person name="Settlage R."/>
            <person name="Preston D."/>
            <person name="Adams L.G."/>
            <person name="Garner H.R."/>
        </authorList>
    </citation>
    <scope>NUCLEOTIDE SEQUENCE [LARGE SCALE GENOMIC DNA]</scope>
    <source>
        <strain>1330</strain>
    </source>
</reference>
<sequence length="396" mass="40787">MSLYGMMRTGVSGMNAQANRLSTVADNIANASTVGYKRAETQFSSLVLPSTAGQYNSGSVLTDVRYGISDQGGIRSTSSTTDLAIDGNGYFVVQGPGGSTYLTRAGSFVPDKNGDLVNSAGYYLLGAGADEAAGGLTVAGLNVVNVNAAALPAEGSTAGDFTVNLPSTDQAPAAGGYNHKTSLISYNDKGEKITLDVYFTKTGADEWNVSVKNAADGVEIGTTVLNFDPTTGDLVSGGNVAVNLGAYGGQTLNLNLGGSTQRAGDYTISQAVINGQAPSSIKGVDVGNDGAVVAVYENGTQKVLYRIPLANVASPNRMTVVSGNIFLPSAESGDVRLGFPQGDGMGKIMSGTLEESNADIAQELTDMIEAQRSYTANSKVFQTGSELMDVLVNLKR</sequence>
<dbReference type="EMBL" id="AE014292">
    <property type="protein sequence ID" value="AAN34299.1"/>
    <property type="molecule type" value="Genomic_DNA"/>
</dbReference>
<dbReference type="EMBL" id="CP002998">
    <property type="protein sequence ID" value="AEM20575.1"/>
    <property type="molecule type" value="Genomic_DNA"/>
</dbReference>
<dbReference type="RefSeq" id="WP_006191491.1">
    <property type="nucleotide sequence ID" value="NZ_KN046805.1"/>
</dbReference>
<dbReference type="SMR" id="Q8FUS9"/>
<dbReference type="GeneID" id="45054122"/>
<dbReference type="KEGG" id="bms:BRA1139"/>
<dbReference type="KEGG" id="bsi:BS1330_II1130"/>
<dbReference type="PATRIC" id="fig|204722.21.peg.220"/>
<dbReference type="HOGENOM" id="CLU_013687_2_3_5"/>
<dbReference type="PhylomeDB" id="Q8FUS9"/>
<dbReference type="PRO" id="PR:Q8FUS9"/>
<dbReference type="Proteomes" id="UP000007104">
    <property type="component" value="Chromosome II"/>
</dbReference>
<dbReference type="GO" id="GO:0009425">
    <property type="term" value="C:bacterial-type flagellum basal body"/>
    <property type="evidence" value="ECO:0007669"/>
    <property type="project" value="UniProtKB-SubCell"/>
</dbReference>
<dbReference type="GO" id="GO:0009424">
    <property type="term" value="C:bacterial-type flagellum hook"/>
    <property type="evidence" value="ECO:0007669"/>
    <property type="project" value="TreeGrafter"/>
</dbReference>
<dbReference type="GO" id="GO:0005829">
    <property type="term" value="C:cytosol"/>
    <property type="evidence" value="ECO:0007669"/>
    <property type="project" value="TreeGrafter"/>
</dbReference>
<dbReference type="GO" id="GO:0071978">
    <property type="term" value="P:bacterial-type flagellum-dependent swarming motility"/>
    <property type="evidence" value="ECO:0007669"/>
    <property type="project" value="TreeGrafter"/>
</dbReference>
<dbReference type="Gene3D" id="2.60.98.20">
    <property type="entry name" value="Flagellar hook protein FlgE"/>
    <property type="match status" value="1"/>
</dbReference>
<dbReference type="InterPro" id="IPR037058">
    <property type="entry name" value="Falgellar_hook_FlgE_sf"/>
</dbReference>
<dbReference type="InterPro" id="IPR001444">
    <property type="entry name" value="Flag_bb_rod_N"/>
</dbReference>
<dbReference type="InterPro" id="IPR019776">
    <property type="entry name" value="Flagellar_basal_body_rod_CS"/>
</dbReference>
<dbReference type="InterPro" id="IPR020013">
    <property type="entry name" value="Flagellar_FlgE/F/G"/>
</dbReference>
<dbReference type="InterPro" id="IPR010930">
    <property type="entry name" value="Flg_bb/hook_C_dom"/>
</dbReference>
<dbReference type="InterPro" id="IPR037925">
    <property type="entry name" value="FlgE/F/G-like"/>
</dbReference>
<dbReference type="InterPro" id="IPR011491">
    <property type="entry name" value="FlgE_D2"/>
</dbReference>
<dbReference type="InterPro" id="IPR053967">
    <property type="entry name" value="LlgE_F_G-like_D1"/>
</dbReference>
<dbReference type="NCBIfam" id="TIGR03506">
    <property type="entry name" value="FlgEFG_subfam"/>
    <property type="match status" value="1"/>
</dbReference>
<dbReference type="PANTHER" id="PTHR30435:SF1">
    <property type="entry name" value="FLAGELLAR HOOK PROTEIN FLGE"/>
    <property type="match status" value="1"/>
</dbReference>
<dbReference type="PANTHER" id="PTHR30435">
    <property type="entry name" value="FLAGELLAR PROTEIN"/>
    <property type="match status" value="1"/>
</dbReference>
<dbReference type="Pfam" id="PF00460">
    <property type="entry name" value="Flg_bb_rod"/>
    <property type="match status" value="1"/>
</dbReference>
<dbReference type="Pfam" id="PF06429">
    <property type="entry name" value="Flg_bbr_C"/>
    <property type="match status" value="1"/>
</dbReference>
<dbReference type="Pfam" id="PF07559">
    <property type="entry name" value="FlgE_D2"/>
    <property type="match status" value="1"/>
</dbReference>
<dbReference type="Pfam" id="PF22692">
    <property type="entry name" value="LlgE_F_G_D1"/>
    <property type="match status" value="1"/>
</dbReference>
<dbReference type="SUPFAM" id="SSF117143">
    <property type="entry name" value="Flagellar hook protein flgE"/>
    <property type="match status" value="1"/>
</dbReference>
<dbReference type="PROSITE" id="PS00588">
    <property type="entry name" value="FLAGELLA_BB_ROD"/>
    <property type="match status" value="1"/>
</dbReference>
<protein>
    <recommendedName>
        <fullName>Flagellar hook protein FlgE</fullName>
    </recommendedName>
</protein>
<accession>Q8FUS9</accession>
<accession>G0KED7</accession>
<keyword id="KW-0975">Bacterial flagellum</keyword>
<proteinExistence type="inferred from homology"/>
<gene>
    <name type="primary">flgE</name>
    <name type="ordered locus">BRA1139</name>
    <name type="ordered locus">BS1330_II1130</name>
</gene>
<feature type="chain" id="PRO_0000180821" description="Flagellar hook protein FlgE">
    <location>
        <begin position="1"/>
        <end position="396"/>
    </location>
</feature>
<comment type="subcellular location">
    <subcellularLocation>
        <location evidence="1">Bacterial flagellum basal body</location>
    </subcellularLocation>
</comment>
<comment type="similarity">
    <text evidence="2">Belongs to the flagella basal body rod proteins family.</text>
</comment>
<comment type="caution">
    <text evidence="2">Brucella species display species-specific inactivation of flagellar genes and are consequently nonmotile.</text>
</comment>
<organism>
    <name type="scientific">Brucella suis biovar 1 (strain 1330)</name>
    <dbReference type="NCBI Taxonomy" id="204722"/>
    <lineage>
        <taxon>Bacteria</taxon>
        <taxon>Pseudomonadati</taxon>
        <taxon>Pseudomonadota</taxon>
        <taxon>Alphaproteobacteria</taxon>
        <taxon>Hyphomicrobiales</taxon>
        <taxon>Brucellaceae</taxon>
        <taxon>Brucella/Ochrobactrum group</taxon>
        <taxon>Brucella</taxon>
    </lineage>
</organism>
<name>FLGE_BRUSU</name>
<evidence type="ECO:0000250" key="1"/>
<evidence type="ECO:0000305" key="2"/>